<proteinExistence type="evidence at protein level"/>
<organism>
    <name type="scientific">Saccharomyces cerevisiae (strain ATCC 204508 / S288c)</name>
    <name type="common">Baker's yeast</name>
    <dbReference type="NCBI Taxonomy" id="559292"/>
    <lineage>
        <taxon>Eukaryota</taxon>
        <taxon>Fungi</taxon>
        <taxon>Dikarya</taxon>
        <taxon>Ascomycota</taxon>
        <taxon>Saccharomycotina</taxon>
        <taxon>Saccharomycetes</taxon>
        <taxon>Saccharomycetales</taxon>
        <taxon>Saccharomycetaceae</taxon>
        <taxon>Saccharomyces</taxon>
    </lineage>
</organism>
<dbReference type="EMBL" id="Z48008">
    <property type="status" value="NOT_ANNOTATED_CDS"/>
    <property type="molecule type" value="Genomic_DNA"/>
</dbReference>
<dbReference type="EMBL" id="BK006938">
    <property type="protein sequence ID" value="DAA11851.1"/>
    <property type="molecule type" value="Genomic_DNA"/>
</dbReference>
<dbReference type="RefSeq" id="NP_878061.3">
    <property type="nucleotide sequence ID" value="NM_001184646.3"/>
</dbReference>
<dbReference type="BioGRID" id="36974">
    <property type="interactions" value="40"/>
</dbReference>
<dbReference type="FunCoup" id="Q3E7Z7">
    <property type="interactions" value="6"/>
</dbReference>
<dbReference type="STRING" id="4932.YDR003W-A"/>
<dbReference type="PaxDb" id="4932-YDR003W-A"/>
<dbReference type="EnsemblFungi" id="YDR003W-A_mRNA">
    <property type="protein sequence ID" value="YDR003W-A"/>
    <property type="gene ID" value="YDR003W-A"/>
</dbReference>
<dbReference type="GeneID" id="1466432"/>
<dbReference type="KEGG" id="sce:YDR003W-A"/>
<dbReference type="AGR" id="SGD:S000028819"/>
<dbReference type="SGD" id="S000028819">
    <property type="gene designation" value="YDR003W-A"/>
</dbReference>
<dbReference type="VEuPathDB" id="FungiDB:YDR003W-A"/>
<dbReference type="HOGENOM" id="CLU_3299647_0_0_1"/>
<dbReference type="InParanoid" id="Q3E7Z7"/>
<dbReference type="BioCyc" id="YEAST:G3O-30122-MONOMER"/>
<dbReference type="PRO" id="PR:Q3E7Z7"/>
<dbReference type="Proteomes" id="UP000002311">
    <property type="component" value="Chromosome IV"/>
</dbReference>
<sequence length="40" mass="4843">MTCGIENSYKSAEKKKKYRSFRFFESRDYSELCIIVGTYY</sequence>
<gene>
    <name type="ordered locus">YDR003W-A</name>
</gene>
<reference key="1">
    <citation type="journal article" date="1997" name="Nature">
        <title>The nucleotide sequence of Saccharomyces cerevisiae chromosome IV.</title>
        <authorList>
            <person name="Jacq C."/>
            <person name="Alt-Moerbe J."/>
            <person name="Andre B."/>
            <person name="Arnold W."/>
            <person name="Bahr A."/>
            <person name="Ballesta J.P.G."/>
            <person name="Bargues M."/>
            <person name="Baron L."/>
            <person name="Becker A."/>
            <person name="Biteau N."/>
            <person name="Bloecker H."/>
            <person name="Blugeon C."/>
            <person name="Boskovic J."/>
            <person name="Brandt P."/>
            <person name="Brueckner M."/>
            <person name="Buitrago M.J."/>
            <person name="Coster F."/>
            <person name="Delaveau T."/>
            <person name="del Rey F."/>
            <person name="Dujon B."/>
            <person name="Eide L.G."/>
            <person name="Garcia-Cantalejo J.M."/>
            <person name="Goffeau A."/>
            <person name="Gomez-Peris A."/>
            <person name="Granotier C."/>
            <person name="Hanemann V."/>
            <person name="Hankeln T."/>
            <person name="Hoheisel J.D."/>
            <person name="Jaeger W."/>
            <person name="Jimenez A."/>
            <person name="Jonniaux J.-L."/>
            <person name="Kraemer C."/>
            <person name="Kuester H."/>
            <person name="Laamanen P."/>
            <person name="Legros Y."/>
            <person name="Louis E.J."/>
            <person name="Moeller-Rieker S."/>
            <person name="Monnet A."/>
            <person name="Moro M."/>
            <person name="Mueller-Auer S."/>
            <person name="Nussbaumer B."/>
            <person name="Paricio N."/>
            <person name="Paulin L."/>
            <person name="Perea J."/>
            <person name="Perez-Alonso M."/>
            <person name="Perez-Ortin J.E."/>
            <person name="Pohl T.M."/>
            <person name="Prydz H."/>
            <person name="Purnelle B."/>
            <person name="Rasmussen S.W."/>
            <person name="Remacha M.A."/>
            <person name="Revuelta J.L."/>
            <person name="Rieger M."/>
            <person name="Salom D."/>
            <person name="Saluz H.P."/>
            <person name="Saiz J.E."/>
            <person name="Saren A.-M."/>
            <person name="Schaefer M."/>
            <person name="Scharfe M."/>
            <person name="Schmidt E.R."/>
            <person name="Schneider C."/>
            <person name="Scholler P."/>
            <person name="Schwarz S."/>
            <person name="Soler-Mira A."/>
            <person name="Urrestarazu L.A."/>
            <person name="Verhasselt P."/>
            <person name="Vissers S."/>
            <person name="Voet M."/>
            <person name="Volckaert G."/>
            <person name="Wagner G."/>
            <person name="Wambutt R."/>
            <person name="Wedler E."/>
            <person name="Wedler H."/>
            <person name="Woelfl S."/>
            <person name="Harris D.E."/>
            <person name="Bowman S."/>
            <person name="Brown D."/>
            <person name="Churcher C.M."/>
            <person name="Connor R."/>
            <person name="Dedman K."/>
            <person name="Gentles S."/>
            <person name="Hamlin N."/>
            <person name="Hunt S."/>
            <person name="Jones L."/>
            <person name="McDonald S."/>
            <person name="Murphy L.D."/>
            <person name="Niblett D."/>
            <person name="Odell C."/>
            <person name="Oliver K."/>
            <person name="Rajandream M.A."/>
            <person name="Richards C."/>
            <person name="Shore L."/>
            <person name="Walsh S.V."/>
            <person name="Barrell B.G."/>
            <person name="Dietrich F.S."/>
            <person name="Mulligan J.T."/>
            <person name="Allen E."/>
            <person name="Araujo R."/>
            <person name="Aviles E."/>
            <person name="Berno A."/>
            <person name="Carpenter J."/>
            <person name="Chen E."/>
            <person name="Cherry J.M."/>
            <person name="Chung E."/>
            <person name="Duncan M."/>
            <person name="Hunicke-Smith S."/>
            <person name="Hyman R.W."/>
            <person name="Komp C."/>
            <person name="Lashkari D."/>
            <person name="Lew H."/>
            <person name="Lin D."/>
            <person name="Mosedale D."/>
            <person name="Nakahara K."/>
            <person name="Namath A."/>
            <person name="Oefner P."/>
            <person name="Oh C."/>
            <person name="Petel F.X."/>
            <person name="Roberts D."/>
            <person name="Schramm S."/>
            <person name="Schroeder M."/>
            <person name="Shogren T."/>
            <person name="Shroff N."/>
            <person name="Winant A."/>
            <person name="Yelton M.A."/>
            <person name="Botstein D."/>
            <person name="Davis R.W."/>
            <person name="Johnston M."/>
            <person name="Andrews S."/>
            <person name="Brinkman R."/>
            <person name="Cooper J."/>
            <person name="Ding H."/>
            <person name="Du Z."/>
            <person name="Favello A."/>
            <person name="Fulton L."/>
            <person name="Gattung S."/>
            <person name="Greco T."/>
            <person name="Hallsworth K."/>
            <person name="Hawkins J."/>
            <person name="Hillier L.W."/>
            <person name="Jier M."/>
            <person name="Johnson D."/>
            <person name="Johnston L."/>
            <person name="Kirsten J."/>
            <person name="Kucaba T."/>
            <person name="Langston Y."/>
            <person name="Latreille P."/>
            <person name="Le T."/>
            <person name="Mardis E."/>
            <person name="Menezes S."/>
            <person name="Miller N."/>
            <person name="Nhan M."/>
            <person name="Pauley A."/>
            <person name="Peluso D."/>
            <person name="Rifkin L."/>
            <person name="Riles L."/>
            <person name="Taich A."/>
            <person name="Trevaskis E."/>
            <person name="Vignati D."/>
            <person name="Wilcox L."/>
            <person name="Wohldman P."/>
            <person name="Vaudin M."/>
            <person name="Wilson R."/>
            <person name="Waterston R."/>
            <person name="Albermann K."/>
            <person name="Hani J."/>
            <person name="Heumann K."/>
            <person name="Kleine K."/>
            <person name="Mewes H.-W."/>
            <person name="Zollner A."/>
            <person name="Zaccaria P."/>
        </authorList>
    </citation>
    <scope>NUCLEOTIDE SEQUENCE [LARGE SCALE GENOMIC DNA]</scope>
    <source>
        <strain>ATCC 204508 / S288c</strain>
    </source>
</reference>
<reference key="2">
    <citation type="journal article" date="2014" name="G3 (Bethesda)">
        <title>The reference genome sequence of Saccharomyces cerevisiae: Then and now.</title>
        <authorList>
            <person name="Engel S.R."/>
            <person name="Dietrich F.S."/>
            <person name="Fisk D.G."/>
            <person name="Binkley G."/>
            <person name="Balakrishnan R."/>
            <person name="Costanzo M.C."/>
            <person name="Dwight S.S."/>
            <person name="Hitz B.C."/>
            <person name="Karra K."/>
            <person name="Nash R.S."/>
            <person name="Weng S."/>
            <person name="Wong E.D."/>
            <person name="Lloyd P."/>
            <person name="Skrzypek M.S."/>
            <person name="Miyasato S.R."/>
            <person name="Simison M."/>
            <person name="Cherry J.M."/>
        </authorList>
    </citation>
    <scope>GENOME REANNOTATION</scope>
    <source>
        <strain>ATCC 204508 / S288c</strain>
    </source>
</reference>
<reference key="3">
    <citation type="journal article" date="2002" name="Genome Res.">
        <title>Parallel identification of new genes in Saccharomyces cerevisiae.</title>
        <authorList>
            <person name="Oshiro G."/>
            <person name="Wodicka L.M."/>
            <person name="Washburn M.P."/>
            <person name="Yates J.R. III"/>
            <person name="Lockhart D.J."/>
            <person name="Winzeler E.A."/>
        </authorList>
    </citation>
    <scope>IDENTIFICATION BY MASS SPECTROMETRY</scope>
</reference>
<accession>Q3E7Z7</accession>
<accession>D6VRZ1</accession>
<protein>
    <recommendedName>
        <fullName>Uncharacterized protein YDR003W-A</fullName>
    </recommendedName>
</protein>
<name>YD003_YEAST</name>
<keyword id="KW-1185">Reference proteome</keyword>
<feature type="chain" id="PRO_0000242622" description="Uncharacterized protein YDR003W-A">
    <location>
        <begin position="1"/>
        <end position="40"/>
    </location>
</feature>